<keyword id="KW-0963">Cytoplasm</keyword>
<keyword id="KW-0488">Methylation</keyword>
<keyword id="KW-0648">Protein biosynthesis</keyword>
<keyword id="KW-1185">Reference proteome</keyword>
<proteinExistence type="inferred from homology"/>
<accession>C5BYB6</accession>
<organism>
    <name type="scientific">Beutenbergia cavernae (strain ATCC BAA-8 / DSM 12333 / CCUG 43141 / JCM 11478 / NBRC 16432 / NCIMB 13614 / HKI 0122)</name>
    <dbReference type="NCBI Taxonomy" id="471853"/>
    <lineage>
        <taxon>Bacteria</taxon>
        <taxon>Bacillati</taxon>
        <taxon>Actinomycetota</taxon>
        <taxon>Actinomycetes</taxon>
        <taxon>Micrococcales</taxon>
        <taxon>Beutenbergiaceae</taxon>
        <taxon>Beutenbergia</taxon>
    </lineage>
</organism>
<comment type="function">
    <text evidence="1">Peptide chain release factor 2 directs the termination of translation in response to the peptide chain termination codons UGA and UAA.</text>
</comment>
<comment type="subcellular location">
    <subcellularLocation>
        <location evidence="1">Cytoplasm</location>
    </subcellularLocation>
</comment>
<comment type="PTM">
    <text evidence="1">Methylated by PrmC. Methylation increases the termination efficiency of RF2.</text>
</comment>
<comment type="similarity">
    <text evidence="1">Belongs to the prokaryotic/mitochondrial release factor family.</text>
</comment>
<reference key="1">
    <citation type="journal article" date="2009" name="Stand. Genomic Sci.">
        <title>Complete genome sequence of Beutenbergia cavernae type strain (HKI 0122).</title>
        <authorList>
            <person name="Land M."/>
            <person name="Pukall R."/>
            <person name="Abt B."/>
            <person name="Goker M."/>
            <person name="Rohde M."/>
            <person name="Glavina Del Rio T."/>
            <person name="Tice H."/>
            <person name="Copeland A."/>
            <person name="Cheng J.F."/>
            <person name="Lucas S."/>
            <person name="Chen F."/>
            <person name="Nolan M."/>
            <person name="Bruce D."/>
            <person name="Goodwin L."/>
            <person name="Pitluck S."/>
            <person name="Ivanova N."/>
            <person name="Mavromatis K."/>
            <person name="Ovchinnikova G."/>
            <person name="Pati A."/>
            <person name="Chen A."/>
            <person name="Palaniappan K."/>
            <person name="Hauser L."/>
            <person name="Chang Y.J."/>
            <person name="Jefferies C.C."/>
            <person name="Saunders E."/>
            <person name="Brettin T."/>
            <person name="Detter J.C."/>
            <person name="Han C."/>
            <person name="Chain P."/>
            <person name="Bristow J."/>
            <person name="Eisen J.A."/>
            <person name="Markowitz V."/>
            <person name="Hugenholtz P."/>
            <person name="Kyrpides N.C."/>
            <person name="Klenk H.P."/>
            <person name="Lapidus A."/>
        </authorList>
    </citation>
    <scope>NUCLEOTIDE SEQUENCE [LARGE SCALE GENOMIC DNA]</scope>
    <source>
        <strain>ATCC BAA-8 / DSM 12333 / CCUG 43141 / JCM 11478 / NBRC 16432 / NCIMB 13614 / HKI 0122</strain>
    </source>
</reference>
<protein>
    <recommendedName>
        <fullName evidence="1">Peptide chain release factor 2</fullName>
        <shortName evidence="1">RF-2</shortName>
    </recommendedName>
</protein>
<evidence type="ECO:0000255" key="1">
    <source>
        <dbReference type="HAMAP-Rule" id="MF_00094"/>
    </source>
</evidence>
<dbReference type="EMBL" id="CP001618">
    <property type="protein sequence ID" value="ACQ81016.1"/>
    <property type="molecule type" value="Genomic_DNA"/>
</dbReference>
<dbReference type="SMR" id="C5BYB6"/>
<dbReference type="STRING" id="471853.Bcav_2771"/>
<dbReference type="KEGG" id="bcv:Bcav_2771"/>
<dbReference type="eggNOG" id="COG1186">
    <property type="taxonomic scope" value="Bacteria"/>
</dbReference>
<dbReference type="HOGENOM" id="CLU_036856_6_0_11"/>
<dbReference type="Proteomes" id="UP000007962">
    <property type="component" value="Chromosome"/>
</dbReference>
<dbReference type="GO" id="GO:0005737">
    <property type="term" value="C:cytoplasm"/>
    <property type="evidence" value="ECO:0007669"/>
    <property type="project" value="UniProtKB-SubCell"/>
</dbReference>
<dbReference type="GO" id="GO:0016149">
    <property type="term" value="F:translation release factor activity, codon specific"/>
    <property type="evidence" value="ECO:0007669"/>
    <property type="project" value="UniProtKB-UniRule"/>
</dbReference>
<dbReference type="FunFam" id="3.30.160.20:FF:000004">
    <property type="entry name" value="Peptide chain release factor 1"/>
    <property type="match status" value="1"/>
</dbReference>
<dbReference type="Gene3D" id="3.30.160.20">
    <property type="match status" value="1"/>
</dbReference>
<dbReference type="Gene3D" id="3.30.70.1660">
    <property type="match status" value="1"/>
</dbReference>
<dbReference type="Gene3D" id="1.20.58.410">
    <property type="entry name" value="Release factor"/>
    <property type="match status" value="1"/>
</dbReference>
<dbReference type="HAMAP" id="MF_00094">
    <property type="entry name" value="Rel_fac_2"/>
    <property type="match status" value="1"/>
</dbReference>
<dbReference type="InterPro" id="IPR005139">
    <property type="entry name" value="PCRF"/>
</dbReference>
<dbReference type="InterPro" id="IPR000352">
    <property type="entry name" value="Pep_chain_release_fac_I"/>
</dbReference>
<dbReference type="InterPro" id="IPR045853">
    <property type="entry name" value="Pep_chain_release_fac_I_sf"/>
</dbReference>
<dbReference type="InterPro" id="IPR004374">
    <property type="entry name" value="PrfB"/>
</dbReference>
<dbReference type="NCBIfam" id="TIGR00020">
    <property type="entry name" value="prfB"/>
    <property type="match status" value="1"/>
</dbReference>
<dbReference type="PANTHER" id="PTHR43116:SF3">
    <property type="entry name" value="CLASS I PEPTIDE CHAIN RELEASE FACTOR"/>
    <property type="match status" value="1"/>
</dbReference>
<dbReference type="PANTHER" id="PTHR43116">
    <property type="entry name" value="PEPTIDE CHAIN RELEASE FACTOR 2"/>
    <property type="match status" value="1"/>
</dbReference>
<dbReference type="Pfam" id="PF03462">
    <property type="entry name" value="PCRF"/>
    <property type="match status" value="1"/>
</dbReference>
<dbReference type="Pfam" id="PF00472">
    <property type="entry name" value="RF-1"/>
    <property type="match status" value="1"/>
</dbReference>
<dbReference type="SMART" id="SM00937">
    <property type="entry name" value="PCRF"/>
    <property type="match status" value="1"/>
</dbReference>
<dbReference type="SUPFAM" id="SSF75620">
    <property type="entry name" value="Release factor"/>
    <property type="match status" value="1"/>
</dbReference>
<dbReference type="PROSITE" id="PS00745">
    <property type="entry name" value="RF_PROK_I"/>
    <property type="match status" value="1"/>
</dbReference>
<gene>
    <name evidence="1" type="primary">prfB</name>
    <name type="ordered locus">Bcav_2771</name>
</gene>
<feature type="chain" id="PRO_1000202707" description="Peptide chain release factor 2">
    <location>
        <begin position="1"/>
        <end position="374"/>
    </location>
</feature>
<feature type="modified residue" description="N5-methylglutamine" evidence="1">
    <location>
        <position position="250"/>
    </location>
</feature>
<name>RF2_BEUC1</name>
<sequence>MATDFPAEISALRGTLEQITAVTDPDALRARIAELSEAAAAPDLWDDPDAAQKVTSRLSHTQSELERLDTLRSRIDDLETLVQLAAEEDDADTLAEAEAELTKIRTSMGELEVRTLLAGEYDSREAVVTIRSGAGGVDAADFAEMLLRMYLRWAERKGYPTQVLDTSYAEEAGLKSATFEVKVPYAFGTLSVEAGTHRLVRISPFDNQGRRQTSFAAVEVIPLIEQTDHIDIPETDIRIDVFRSSGPGGQSVNTTDSAVRITHLPTGIVVSMQNEKSQIQNRAAAMRVLQSRLLLAMQEEENAKKKELAGDVKASWGDQMRSYVLQPYQMVKDLRTEHEVGNPSAVFDGDIDDFIEAGIRWRRQQQTVRESATA</sequence>